<gene>
    <name evidence="1" type="primary">cysC</name>
    <name type="ordered locus">Deide_13910</name>
</gene>
<comment type="function">
    <text evidence="1">Catalyzes the synthesis of activated sulfate.</text>
</comment>
<comment type="catalytic activity">
    <reaction evidence="1">
        <text>adenosine 5'-phosphosulfate + ATP = 3'-phosphoadenylyl sulfate + ADP + H(+)</text>
        <dbReference type="Rhea" id="RHEA:24152"/>
        <dbReference type="ChEBI" id="CHEBI:15378"/>
        <dbReference type="ChEBI" id="CHEBI:30616"/>
        <dbReference type="ChEBI" id="CHEBI:58243"/>
        <dbReference type="ChEBI" id="CHEBI:58339"/>
        <dbReference type="ChEBI" id="CHEBI:456216"/>
        <dbReference type="EC" id="2.7.1.25"/>
    </reaction>
</comment>
<comment type="pathway">
    <text evidence="1">Sulfur metabolism; hydrogen sulfide biosynthesis; sulfite from sulfate: step 2/3.</text>
</comment>
<comment type="similarity">
    <text evidence="1">Belongs to the APS kinase family.</text>
</comment>
<dbReference type="EC" id="2.7.1.25" evidence="1"/>
<dbReference type="EMBL" id="CP001114">
    <property type="protein sequence ID" value="ACO46334.1"/>
    <property type="molecule type" value="Genomic_DNA"/>
</dbReference>
<dbReference type="RefSeq" id="WP_012693457.1">
    <property type="nucleotide sequence ID" value="NC_012526.1"/>
</dbReference>
<dbReference type="SMR" id="C1CVW7"/>
<dbReference type="STRING" id="546414.Deide_13910"/>
<dbReference type="PaxDb" id="546414-Deide_13910"/>
<dbReference type="KEGG" id="ddr:Deide_13910"/>
<dbReference type="eggNOG" id="COG0529">
    <property type="taxonomic scope" value="Bacteria"/>
</dbReference>
<dbReference type="HOGENOM" id="CLU_046932_2_1_0"/>
<dbReference type="OrthoDB" id="9804504at2"/>
<dbReference type="UniPathway" id="UPA00140">
    <property type="reaction ID" value="UER00205"/>
</dbReference>
<dbReference type="Proteomes" id="UP000002208">
    <property type="component" value="Chromosome"/>
</dbReference>
<dbReference type="GO" id="GO:0005737">
    <property type="term" value="C:cytoplasm"/>
    <property type="evidence" value="ECO:0007669"/>
    <property type="project" value="TreeGrafter"/>
</dbReference>
<dbReference type="GO" id="GO:0004020">
    <property type="term" value="F:adenylylsulfate kinase activity"/>
    <property type="evidence" value="ECO:0007669"/>
    <property type="project" value="UniProtKB-UniRule"/>
</dbReference>
<dbReference type="GO" id="GO:0005524">
    <property type="term" value="F:ATP binding"/>
    <property type="evidence" value="ECO:0007669"/>
    <property type="project" value="UniProtKB-UniRule"/>
</dbReference>
<dbReference type="GO" id="GO:0004781">
    <property type="term" value="F:sulfate adenylyltransferase (ATP) activity"/>
    <property type="evidence" value="ECO:0007669"/>
    <property type="project" value="TreeGrafter"/>
</dbReference>
<dbReference type="GO" id="GO:0070814">
    <property type="term" value="P:hydrogen sulfide biosynthetic process"/>
    <property type="evidence" value="ECO:0007669"/>
    <property type="project" value="UniProtKB-UniRule"/>
</dbReference>
<dbReference type="GO" id="GO:0010134">
    <property type="term" value="P:sulfate assimilation via adenylyl sulfate reduction"/>
    <property type="evidence" value="ECO:0007669"/>
    <property type="project" value="TreeGrafter"/>
</dbReference>
<dbReference type="GO" id="GO:0019379">
    <property type="term" value="P:sulfate assimilation, phosphoadenylyl sulfate reduction by phosphoadenylyl-sulfate reductase (thioredoxin)"/>
    <property type="evidence" value="ECO:0007669"/>
    <property type="project" value="TreeGrafter"/>
</dbReference>
<dbReference type="CDD" id="cd02027">
    <property type="entry name" value="APSK"/>
    <property type="match status" value="1"/>
</dbReference>
<dbReference type="Gene3D" id="3.40.50.300">
    <property type="entry name" value="P-loop containing nucleotide triphosphate hydrolases"/>
    <property type="match status" value="1"/>
</dbReference>
<dbReference type="HAMAP" id="MF_00065">
    <property type="entry name" value="Adenylyl_sulf_kinase"/>
    <property type="match status" value="1"/>
</dbReference>
<dbReference type="InterPro" id="IPR002891">
    <property type="entry name" value="APS_kinase"/>
</dbReference>
<dbReference type="InterPro" id="IPR027417">
    <property type="entry name" value="P-loop_NTPase"/>
</dbReference>
<dbReference type="InterPro" id="IPR050512">
    <property type="entry name" value="Sulf_AdTrans/APS_kinase"/>
</dbReference>
<dbReference type="NCBIfam" id="TIGR00455">
    <property type="entry name" value="apsK"/>
    <property type="match status" value="1"/>
</dbReference>
<dbReference type="NCBIfam" id="NF002059">
    <property type="entry name" value="PRK00889.1"/>
    <property type="match status" value="1"/>
</dbReference>
<dbReference type="NCBIfam" id="NF003013">
    <property type="entry name" value="PRK03846.1"/>
    <property type="match status" value="1"/>
</dbReference>
<dbReference type="PANTHER" id="PTHR42700">
    <property type="entry name" value="SULFATE ADENYLYLTRANSFERASE"/>
    <property type="match status" value="1"/>
</dbReference>
<dbReference type="PANTHER" id="PTHR42700:SF1">
    <property type="entry name" value="SULFATE ADENYLYLTRANSFERASE"/>
    <property type="match status" value="1"/>
</dbReference>
<dbReference type="Pfam" id="PF01583">
    <property type="entry name" value="APS_kinase"/>
    <property type="match status" value="1"/>
</dbReference>
<dbReference type="SUPFAM" id="SSF52540">
    <property type="entry name" value="P-loop containing nucleoside triphosphate hydrolases"/>
    <property type="match status" value="1"/>
</dbReference>
<organism>
    <name type="scientific">Deinococcus deserti (strain DSM 17065 / CIP 109153 / LMG 22923 / VCD115)</name>
    <dbReference type="NCBI Taxonomy" id="546414"/>
    <lineage>
        <taxon>Bacteria</taxon>
        <taxon>Thermotogati</taxon>
        <taxon>Deinococcota</taxon>
        <taxon>Deinococci</taxon>
        <taxon>Deinococcales</taxon>
        <taxon>Deinococcaceae</taxon>
        <taxon>Deinococcus</taxon>
    </lineage>
</organism>
<name>CYSC_DEIDV</name>
<evidence type="ECO:0000255" key="1">
    <source>
        <dbReference type="HAMAP-Rule" id="MF_00065"/>
    </source>
</evidence>
<feature type="chain" id="PRO_1000202411" description="Adenylyl-sulfate kinase">
    <location>
        <begin position="1"/>
        <end position="181"/>
    </location>
</feature>
<feature type="active site" description="Phosphoserine intermediate" evidence="1">
    <location>
        <position position="94"/>
    </location>
</feature>
<feature type="binding site" evidence="1">
    <location>
        <begin position="20"/>
        <end position="27"/>
    </location>
    <ligand>
        <name>ATP</name>
        <dbReference type="ChEBI" id="CHEBI:30616"/>
    </ligand>
</feature>
<accession>C1CVW7</accession>
<proteinExistence type="inferred from homology"/>
<keyword id="KW-0067">ATP-binding</keyword>
<keyword id="KW-0418">Kinase</keyword>
<keyword id="KW-0547">Nucleotide-binding</keyword>
<keyword id="KW-0597">Phosphoprotein</keyword>
<keyword id="KW-1185">Reference proteome</keyword>
<keyword id="KW-0808">Transferase</keyword>
<sequence>MTATLQRESVGTGRVVWFTGLSGAGKSTLASALYEELIARGEQVELLDGDAVRENLSKGLGFTKADRDTNVRRIAFVAGLLAKHGVTVLVSAISPYAETRREVLANLPNPTEVFVDAPLAVVTERDVKGLYLKALAGEIPHFTGVSDPYEAPENPDLHLRTDRISVQDGLKQLLDHLGVNA</sequence>
<protein>
    <recommendedName>
        <fullName evidence="1">Adenylyl-sulfate kinase</fullName>
        <ecNumber evidence="1">2.7.1.25</ecNumber>
    </recommendedName>
    <alternativeName>
        <fullName evidence="1">APS kinase</fullName>
    </alternativeName>
    <alternativeName>
        <fullName evidence="1">ATP adenosine-5'-phosphosulfate 3'-phosphotransferase</fullName>
    </alternativeName>
    <alternativeName>
        <fullName evidence="1">Adenosine-5'-phosphosulfate kinase</fullName>
    </alternativeName>
</protein>
<reference key="1">
    <citation type="journal article" date="2009" name="PLoS Genet.">
        <title>Alliance of proteomics and genomics to unravel the specificities of Sahara bacterium Deinococcus deserti.</title>
        <authorList>
            <person name="de Groot A."/>
            <person name="Dulermo R."/>
            <person name="Ortet P."/>
            <person name="Blanchard L."/>
            <person name="Guerin P."/>
            <person name="Fernandez B."/>
            <person name="Vacherie B."/>
            <person name="Dossat C."/>
            <person name="Jolivet E."/>
            <person name="Siguier P."/>
            <person name="Chandler M."/>
            <person name="Barakat M."/>
            <person name="Dedieu A."/>
            <person name="Barbe V."/>
            <person name="Heulin T."/>
            <person name="Sommer S."/>
            <person name="Achouak W."/>
            <person name="Armengaud J."/>
        </authorList>
    </citation>
    <scope>NUCLEOTIDE SEQUENCE [LARGE SCALE GENOMIC DNA]</scope>
    <source>
        <strain>DSM 17065 / CIP 109153 / LMG 22923 / VCD115</strain>
    </source>
</reference>